<accession>C4ZRS5</accession>
<name>RNH2_ECOBW</name>
<dbReference type="EC" id="3.1.26.4" evidence="1"/>
<dbReference type="EMBL" id="CP001396">
    <property type="protein sequence ID" value="ACR65468.1"/>
    <property type="molecule type" value="Genomic_DNA"/>
</dbReference>
<dbReference type="RefSeq" id="WP_000569430.1">
    <property type="nucleotide sequence ID" value="NC_012759.1"/>
</dbReference>
<dbReference type="SMR" id="C4ZRS5"/>
<dbReference type="GeneID" id="93777242"/>
<dbReference type="KEGG" id="ebw:BWG_0175"/>
<dbReference type="HOGENOM" id="CLU_036532_3_2_6"/>
<dbReference type="GO" id="GO:0005737">
    <property type="term" value="C:cytoplasm"/>
    <property type="evidence" value="ECO:0007669"/>
    <property type="project" value="UniProtKB-SubCell"/>
</dbReference>
<dbReference type="GO" id="GO:0032299">
    <property type="term" value="C:ribonuclease H2 complex"/>
    <property type="evidence" value="ECO:0007669"/>
    <property type="project" value="TreeGrafter"/>
</dbReference>
<dbReference type="GO" id="GO:0030145">
    <property type="term" value="F:manganese ion binding"/>
    <property type="evidence" value="ECO:0007669"/>
    <property type="project" value="UniProtKB-UniRule"/>
</dbReference>
<dbReference type="GO" id="GO:0003723">
    <property type="term" value="F:RNA binding"/>
    <property type="evidence" value="ECO:0007669"/>
    <property type="project" value="InterPro"/>
</dbReference>
<dbReference type="GO" id="GO:0004523">
    <property type="term" value="F:RNA-DNA hybrid ribonuclease activity"/>
    <property type="evidence" value="ECO:0007669"/>
    <property type="project" value="UniProtKB-UniRule"/>
</dbReference>
<dbReference type="GO" id="GO:0043137">
    <property type="term" value="P:DNA replication, removal of RNA primer"/>
    <property type="evidence" value="ECO:0007669"/>
    <property type="project" value="TreeGrafter"/>
</dbReference>
<dbReference type="GO" id="GO:0006298">
    <property type="term" value="P:mismatch repair"/>
    <property type="evidence" value="ECO:0007669"/>
    <property type="project" value="TreeGrafter"/>
</dbReference>
<dbReference type="CDD" id="cd07182">
    <property type="entry name" value="RNase_HII_bacteria_HII_like"/>
    <property type="match status" value="1"/>
</dbReference>
<dbReference type="FunFam" id="3.30.420.10:FF:000006">
    <property type="entry name" value="Ribonuclease HII"/>
    <property type="match status" value="1"/>
</dbReference>
<dbReference type="Gene3D" id="3.30.420.10">
    <property type="entry name" value="Ribonuclease H-like superfamily/Ribonuclease H"/>
    <property type="match status" value="1"/>
</dbReference>
<dbReference type="HAMAP" id="MF_00052_B">
    <property type="entry name" value="RNase_HII_B"/>
    <property type="match status" value="1"/>
</dbReference>
<dbReference type="InterPro" id="IPR022898">
    <property type="entry name" value="RNase_HII"/>
</dbReference>
<dbReference type="InterPro" id="IPR001352">
    <property type="entry name" value="RNase_HII/HIII"/>
</dbReference>
<dbReference type="InterPro" id="IPR024567">
    <property type="entry name" value="RNase_HII/HIII_dom"/>
</dbReference>
<dbReference type="InterPro" id="IPR012337">
    <property type="entry name" value="RNaseH-like_sf"/>
</dbReference>
<dbReference type="InterPro" id="IPR036397">
    <property type="entry name" value="RNaseH_sf"/>
</dbReference>
<dbReference type="NCBIfam" id="NF000594">
    <property type="entry name" value="PRK00015.1-1"/>
    <property type="match status" value="1"/>
</dbReference>
<dbReference type="NCBIfam" id="NF000595">
    <property type="entry name" value="PRK00015.1-3"/>
    <property type="match status" value="1"/>
</dbReference>
<dbReference type="NCBIfam" id="NF000596">
    <property type="entry name" value="PRK00015.1-4"/>
    <property type="match status" value="1"/>
</dbReference>
<dbReference type="PANTHER" id="PTHR10954">
    <property type="entry name" value="RIBONUCLEASE H2 SUBUNIT A"/>
    <property type="match status" value="1"/>
</dbReference>
<dbReference type="PANTHER" id="PTHR10954:SF18">
    <property type="entry name" value="RIBONUCLEASE HII"/>
    <property type="match status" value="1"/>
</dbReference>
<dbReference type="Pfam" id="PF01351">
    <property type="entry name" value="RNase_HII"/>
    <property type="match status" value="1"/>
</dbReference>
<dbReference type="SUPFAM" id="SSF53098">
    <property type="entry name" value="Ribonuclease H-like"/>
    <property type="match status" value="1"/>
</dbReference>
<dbReference type="PROSITE" id="PS51975">
    <property type="entry name" value="RNASE_H_2"/>
    <property type="match status" value="1"/>
</dbReference>
<gene>
    <name evidence="1" type="primary">rnhB</name>
    <name type="ordered locus">BWG_0175</name>
</gene>
<organism>
    <name type="scientific">Escherichia coli (strain K12 / MC4100 / BW2952)</name>
    <dbReference type="NCBI Taxonomy" id="595496"/>
    <lineage>
        <taxon>Bacteria</taxon>
        <taxon>Pseudomonadati</taxon>
        <taxon>Pseudomonadota</taxon>
        <taxon>Gammaproteobacteria</taxon>
        <taxon>Enterobacterales</taxon>
        <taxon>Enterobacteriaceae</taxon>
        <taxon>Escherichia</taxon>
    </lineage>
</organism>
<reference key="1">
    <citation type="journal article" date="2009" name="J. Bacteriol.">
        <title>Genomic sequencing reveals regulatory mutations and recombinational events in the widely used MC4100 lineage of Escherichia coli K-12.</title>
        <authorList>
            <person name="Ferenci T."/>
            <person name="Zhou Z."/>
            <person name="Betteridge T."/>
            <person name="Ren Y."/>
            <person name="Liu Y."/>
            <person name="Feng L."/>
            <person name="Reeves P.R."/>
            <person name="Wang L."/>
        </authorList>
    </citation>
    <scope>NUCLEOTIDE SEQUENCE [LARGE SCALE GENOMIC DNA]</scope>
    <source>
        <strain>K12 / MC4100 / BW2952</strain>
    </source>
</reference>
<evidence type="ECO:0000255" key="1">
    <source>
        <dbReference type="HAMAP-Rule" id="MF_00052"/>
    </source>
</evidence>
<evidence type="ECO:0000255" key="2">
    <source>
        <dbReference type="PROSITE-ProRule" id="PRU01319"/>
    </source>
</evidence>
<proteinExistence type="inferred from homology"/>
<keyword id="KW-0963">Cytoplasm</keyword>
<keyword id="KW-0255">Endonuclease</keyword>
<keyword id="KW-0378">Hydrolase</keyword>
<keyword id="KW-0464">Manganese</keyword>
<keyword id="KW-0479">Metal-binding</keyword>
<keyword id="KW-0540">Nuclease</keyword>
<sequence>MIEFVYPHTQLVAGVDEVGRGPLVGAVVTAAVILDPARPIAGLNDSKKLSEKRRLALYEEIKEKALSWSLGRAEPHEIDELNILHATMLAMQRAVAGLHIAPEYVLIDGNRCPKLPMPAMAVVKGDSRVPEISAASILAKVTRDAEMAALDIVFPQYGFAQHKGYPTAFHLEKLAEHGATEHHRRSFGPVKRALGLAS</sequence>
<protein>
    <recommendedName>
        <fullName evidence="1">Ribonuclease HII</fullName>
        <shortName evidence="1">RNase HII</shortName>
        <ecNumber evidence="1">3.1.26.4</ecNumber>
    </recommendedName>
</protein>
<comment type="function">
    <text evidence="1">Endonuclease that specifically degrades the RNA of RNA-DNA hybrids.</text>
</comment>
<comment type="catalytic activity">
    <reaction evidence="1">
        <text>Endonucleolytic cleavage to 5'-phosphomonoester.</text>
        <dbReference type="EC" id="3.1.26.4"/>
    </reaction>
</comment>
<comment type="cofactor">
    <cofactor evidence="1">
        <name>Mn(2+)</name>
        <dbReference type="ChEBI" id="CHEBI:29035"/>
    </cofactor>
    <cofactor evidence="1">
        <name>Mg(2+)</name>
        <dbReference type="ChEBI" id="CHEBI:18420"/>
    </cofactor>
    <text evidence="1">Manganese or magnesium. Binds 1 divalent metal ion per monomer in the absence of substrate. May bind a second metal ion after substrate binding.</text>
</comment>
<comment type="subcellular location">
    <subcellularLocation>
        <location evidence="1">Cytoplasm</location>
    </subcellularLocation>
</comment>
<comment type="similarity">
    <text evidence="1">Belongs to the RNase HII family.</text>
</comment>
<feature type="chain" id="PRO_1000202282" description="Ribonuclease HII">
    <location>
        <begin position="1"/>
        <end position="198"/>
    </location>
</feature>
<feature type="domain" description="RNase H type-2" evidence="2">
    <location>
        <begin position="10"/>
        <end position="198"/>
    </location>
</feature>
<feature type="binding site" evidence="1">
    <location>
        <position position="16"/>
    </location>
    <ligand>
        <name>a divalent metal cation</name>
        <dbReference type="ChEBI" id="CHEBI:60240"/>
    </ligand>
</feature>
<feature type="binding site" evidence="1">
    <location>
        <position position="17"/>
    </location>
    <ligand>
        <name>a divalent metal cation</name>
        <dbReference type="ChEBI" id="CHEBI:60240"/>
    </ligand>
</feature>
<feature type="binding site" evidence="1">
    <location>
        <position position="108"/>
    </location>
    <ligand>
        <name>a divalent metal cation</name>
        <dbReference type="ChEBI" id="CHEBI:60240"/>
    </ligand>
</feature>